<gene>
    <name type="primary">Irf3</name>
</gene>
<comment type="function">
    <text evidence="3 7 8 9">Key transcriptional regulator of type I interferon (IFN)-dependent immune responses which plays a critical role in the innate immune response against DNA and RNA viruses (PubMed:15800576). Regulates the transcription of type I IFN genes (IFN-alpha and IFN-beta) and IFN-stimulated genes (ISG) by binding to an interferon-stimulated response element (ISRE) in their promoters (PubMed:15800576). Acts as a more potent activator of the IFN-beta (IFNB) gene than the IFN-alpha (IFNA) gene and plays a critical role in both the early and late phases of the IFNA/B gene induction (PubMed:16846591, PubMed:16979567, PubMed:20049431). Found in an inactive form in the cytoplasm of uninfected cells and following viral infection, double-stranded RNA (dsRNA), or toll-like receptor (TLR) signaling, is phosphorylated by IKBKE and TBK1 kinases (PubMed:16846591, PubMed:16979567, PubMed:20049431). This induces a conformational change, leading to its dimerization and nuclear localization and association with CREB binding protein (CREBBP) to form dsRNA-activated factor 1 (DRAF1), a complex which activates the transcription of the type I IFN and ISG genes (PubMed:16846591, PubMed:16979567, PubMed:20049431). Can activate distinct gene expression programs in macrophages and can induce significant apoptosis in primary macrophages (PubMed:16846591, PubMed:16979567, PubMed:20049431).</text>
</comment>
<comment type="activity regulation">
    <text evidence="1">In the absence of viral infection, maintained as a monomer in an autoinhibited state. Phosphorylation by TBK1 and IKBKE disrupts this autoinhibition leading to the liberation of the DNA-binding and dimerization activities and its nuclear localization where it can activate type I IFN and ISG genes. Phosphorylation and activation follow the following steps: innate adapter proteins, such as MAVS, STING1 or TICAM1, are first activated by viral RNA, cytosolic DNA and bacterial lipopolysaccharide (LPS), respectively, leading to activation of the kinases TBK1 and IKBKE. These kinases then phosphorylate the adapter proteins on their pLxIS motif, leading to recruitment of IRF3, thereby licensing IRF3 for phosphorylation by TBK1. Phosphorylated IRF3 dissociates from the adapter proteins, dimerizes, and then enters the nucleus to induce IFNs.</text>
</comment>
<comment type="subunit">
    <text evidence="1">Monomer. Homodimer; phosphorylation-induced. Interacts (when phosphorylated) with CREBBP. Interacts with MAVS (via phosphorylated pLxIS motif). Interacts with TICAM1 (via phosphorylated pLxIS motif). Interacts with STING1 (via phosphorylated pLxIS motif). Interacts with IKBKE and TBK1. Interacts with TICAM2. Interacts with RBCK1. Interacts with HERC5. Interacts with DDX3X; the interaction allows the phosphorylation and activation of IRF3 by IKBKE. Interacts with TRIM21 and ULK1, in the presence of TRIM21; this interaction leads to IRF3 degradation by autophagy. Interacts with RIOK3; RIOK3 probably mediates the interaction of TBK1 with IRF3. Interacts with ILRUN; the interaction inhibits IRF3 binding to its DNA consensus sequence. Interacts with LYAR; this interaction impairs IRF3 DNA-binding activity. Interacts with TRAF3. Interacts with ZDHHC11; ZDHHC11 recruits IRF3 to STING1 upon DNA virus infection and thereby promotes IRF3 activation (By similarity). Interacts with HSP90AA1; the interaction mediates IRF3 association with TOMM70. Interacts with BCL2; the interaction decreases upon Sendai virus infection. Interacts with BAX; the interaction is direct, increases upon virus infection and mediates the formation of the apoptosis complex TOMM70:HSP90AA1:IRF3:BAX (By similarity). Interacts with DDX56 (By similarity). Interacts with NBR1 (By similarity).</text>
</comment>
<comment type="interaction">
    <interactant intactId="EBI-7947049">
        <id>P70671</id>
    </interactant>
    <interactant intactId="EBI-7947049">
        <id>P70671</id>
        <label>Irf3</label>
    </interactant>
    <organismsDiffer>false</organismsDiffer>
    <experiments>3</experiments>
</comment>
<comment type="subcellular location">
    <subcellularLocation>
        <location evidence="1">Cytoplasm</location>
    </subcellularLocation>
    <subcellularLocation>
        <location evidence="1">Nucleus</location>
    </subcellularLocation>
    <subcellularLocation>
        <location evidence="1">Mitochondrion</location>
    </subcellularLocation>
    <text evidence="1">Shuttles between cytoplasmic and nuclear compartments, with export being the prevailing effect. When activated, IRF3 interaction with CREBBP prevents its export to the cytoplasm. Recruited to mitochondria via TOMM70:HSP90AA1 upon Sendai virus infection.</text>
</comment>
<comment type="PTM">
    <text evidence="1 5">Constitutively phosphorylated on many Ser/Thr residues (PubMed:22065572). Activated following phosphorylation by TBK1 and IKBKE (By similarity). Innate adapter proteins, such as MAVS, STING1 or TICAM1, are first activated by viral RNA, cytosolic DNA, and bacterial lipopolysaccharide (LPS), respectively, leading to activation of the kinases TBK1 and IKBKE (By similarity). These kinases then phosphorylate the adapter proteins on the pLxIS motif, leading to recruitment of IRF3, thereby licensing IRF3 for phosphorylation by TBK1 (By similarity). Phosphorylation at Ser-379 is followed by pyrophosphorylation at the same residue, promoting phosphorylation at Ser-388 (By similarity). Phosphorylated IRF3 dissociates from the adapter proteins, dimerizes, and then enters the nucleus to induce IFNs (By similarity).</text>
</comment>
<comment type="PTM">
    <text evidence="1">Pyrophosphorylated by UAP1 following phosphorylation at Ser-379 by TBK1 (By similarity). Pyrophosphorylation promotes subsequent phosphorylation at Ser-388, leading to homodimerization of IRF3 (By similarity).</text>
</comment>
<comment type="PTM">
    <text evidence="6">Acetylation at Lys-359 by KAT8 inhibits recruimtent to promoters and transcription factor activity (PubMed:30842237). Acetylation by KAT8 is promoted by phosphorylation at Ser-388 (PubMed:30842237).</text>
</comment>
<comment type="PTM">
    <text evidence="1">Ubiquitinated; ubiquitination involves RBCK1 leading to proteasomal degradation. Polyubiquitinated; ubiquitination involves TRIM21 leading to proteasomal degradation. Ubiquitinated by UBE3C, leading to its degradation. Deubiquitinated by USP5 on both 'Lys-48'-linked unanchored and 'Lys-63'-linked anchored polyubiquitin, leading to inhibition of anti-RNA viral innate immunity.</text>
</comment>
<comment type="PTM">
    <text evidence="1">ISGylated by HERC5 resulting in sustained IRF3 activation and in the inhibition of IRF3 ubiquitination by disrupting PIN1 binding. The phosphorylation state of IRF3 does not alter ISGylation.</text>
</comment>
<comment type="PTM">
    <text evidence="1">Proteolytically cleaved by apoptotic caspases during apoptosis, leading to its inactivation. Cleavage by CASP3 during virus-induced apoptosis inactivates it, preventing cytokine overproduction.</text>
</comment>
<comment type="disruption phenotype">
    <text evidence="4">Double knockout with TREX1 does not show a visible phenotype.</text>
</comment>
<comment type="similarity">
    <text evidence="2">Belongs to the IRF family.</text>
</comment>
<organism>
    <name type="scientific">Mus musculus</name>
    <name type="common">Mouse</name>
    <dbReference type="NCBI Taxonomy" id="10090"/>
    <lineage>
        <taxon>Eukaryota</taxon>
        <taxon>Metazoa</taxon>
        <taxon>Chordata</taxon>
        <taxon>Craniata</taxon>
        <taxon>Vertebrata</taxon>
        <taxon>Euteleostomi</taxon>
        <taxon>Mammalia</taxon>
        <taxon>Eutheria</taxon>
        <taxon>Euarchontoglires</taxon>
        <taxon>Glires</taxon>
        <taxon>Rodentia</taxon>
        <taxon>Myomorpha</taxon>
        <taxon>Muroidea</taxon>
        <taxon>Muridae</taxon>
        <taxon>Murinae</taxon>
        <taxon>Mus</taxon>
        <taxon>Mus</taxon>
    </lineage>
</organism>
<feature type="chain" id="PRO_0000154554" description="Interferon regulatory factor 3">
    <location>
        <begin position="1"/>
        <end position="419"/>
    </location>
</feature>
<feature type="DNA-binding region" description="IRF tryptophan pentad repeat" evidence="2">
    <location>
        <begin position="5"/>
        <end position="111"/>
    </location>
</feature>
<feature type="region of interest" description="Mediates interaction with ZDHHC11" evidence="1">
    <location>
        <begin position="140"/>
        <end position="419"/>
    </location>
</feature>
<feature type="region of interest" description="Interaction with HERC5" evidence="1">
    <location>
        <begin position="194"/>
        <end position="353"/>
    </location>
</feature>
<feature type="site" description="Cleavage; by CASP3" evidence="1">
    <location>
        <begin position="121"/>
        <end position="122"/>
    </location>
</feature>
<feature type="site" description="Cleavage; by CASP3" evidence="1">
    <location>
        <begin position="125"/>
        <end position="126"/>
    </location>
</feature>
<feature type="modified residue" description="Phosphothreonine" evidence="1">
    <location>
        <position position="3"/>
    </location>
</feature>
<feature type="modified residue" description="Phosphoserine" evidence="1">
    <location>
        <position position="14"/>
    </location>
</feature>
<feature type="modified residue" description="Phosphothreonine" evidence="1">
    <location>
        <position position="75"/>
    </location>
</feature>
<feature type="modified residue" description="Phosphoserine" evidence="1">
    <location>
        <position position="97"/>
    </location>
</feature>
<feature type="modified residue" description="Phosphoserine" evidence="10">
    <location>
        <position position="123"/>
    </location>
</feature>
<feature type="modified residue" description="Phosphoserine" evidence="10">
    <location>
        <position position="135"/>
    </location>
</feature>
<feature type="modified residue" description="Phosphothreonine" evidence="1">
    <location>
        <position position="230"/>
    </location>
</feature>
<feature type="modified residue" description="Phosphothreonine" evidence="1">
    <location>
        <position position="237"/>
    </location>
</feature>
<feature type="modified residue" description="Phosphothreonine" evidence="1">
    <location>
        <position position="246"/>
    </location>
</feature>
<feature type="modified residue" description="N6-acetyllysine" evidence="6">
    <location>
        <position position="359"/>
    </location>
</feature>
<feature type="modified residue" description="Phosphoserine" evidence="1">
    <location>
        <position position="378"/>
    </location>
</feature>
<feature type="modified residue" description="Diphosphoserine" evidence="1">
    <location>
        <position position="379"/>
    </location>
</feature>
<feature type="modified residue" description="Phosphoserine; by TBK1" evidence="1">
    <location>
        <position position="379"/>
    </location>
</feature>
<feature type="modified residue" description="Phosphoserine; by IKKE" evidence="6">
    <location>
        <position position="388"/>
    </location>
</feature>
<feature type="modified residue" description="Phosphoserine" evidence="1">
    <location>
        <position position="390"/>
    </location>
</feature>
<feature type="modified residue" description="Phosphothreonine" evidence="1">
    <location>
        <position position="396"/>
    </location>
</feature>
<feature type="cross-link" description="Glycyl lysine isopeptide (Lys-Gly) (interchain with G-Cter in ISG15)" evidence="1">
    <location>
        <position position="188"/>
    </location>
</feature>
<feature type="cross-link" description="Glycyl lysine isopeptide (Lys-Gly) (interchain with G-Cter in ISG15)" evidence="1">
    <location>
        <position position="353"/>
    </location>
</feature>
<feature type="cross-link" description="Glycyl lysine isopeptide (Lys-Gly) (interchain with G-Cter in ISG15)" evidence="1">
    <location>
        <position position="359"/>
    </location>
</feature>
<feature type="mutagenesis site" description="Does not affect acetylation by KAT8." evidence="6">
    <original>K</original>
    <variation>A</variation>
    <location>
        <position position="68"/>
    </location>
</feature>
<feature type="mutagenesis site" description="Does not affect acetylation by KAT8." evidence="6">
    <original>K</original>
    <variation>A</variation>
    <location>
        <position position="70"/>
    </location>
</feature>
<feature type="mutagenesis site" description="Does not affect acetylation by KAT8." evidence="6">
    <original>K</original>
    <variation>A</variation>
    <location>
        <position position="152"/>
    </location>
</feature>
<feature type="mutagenesis site" description="Abolished acetylation by KAT8, leading to increased transcription factor activity." evidence="6">
    <original>K</original>
    <variation>A</variation>
    <variation>R</variation>
    <location>
        <position position="359"/>
    </location>
</feature>
<feature type="mutagenesis site" description="Decreased acetylation by KAT8." evidence="6">
    <original>S</original>
    <variation>A</variation>
    <location>
        <position position="388"/>
    </location>
</feature>
<feature type="strand" evidence="11">
    <location>
        <begin position="198"/>
        <end position="206"/>
    </location>
</feature>
<feature type="strand" evidence="11">
    <location>
        <begin position="208"/>
        <end position="214"/>
    </location>
</feature>
<feature type="strand" evidence="11">
    <location>
        <begin position="220"/>
        <end position="225"/>
    </location>
</feature>
<feature type="strand" evidence="11">
    <location>
        <begin position="231"/>
        <end position="237"/>
    </location>
</feature>
<feature type="helix" evidence="11">
    <location>
        <begin position="241"/>
        <end position="243"/>
    </location>
</feature>
<feature type="helix" evidence="11">
    <location>
        <begin position="248"/>
        <end position="259"/>
    </location>
</feature>
<feature type="turn" evidence="11">
    <location>
        <begin position="260"/>
        <end position="263"/>
    </location>
</feature>
<feature type="strand" evidence="11">
    <location>
        <begin position="265"/>
        <end position="269"/>
    </location>
</feature>
<feature type="strand" evidence="11">
    <location>
        <begin position="271"/>
        <end position="278"/>
    </location>
</feature>
<feature type="strand" evidence="11">
    <location>
        <begin position="280"/>
        <end position="282"/>
    </location>
</feature>
<feature type="strand" evidence="11">
    <location>
        <begin position="284"/>
        <end position="289"/>
    </location>
</feature>
<feature type="strand" evidence="11">
    <location>
        <begin position="301"/>
        <end position="303"/>
    </location>
</feature>
<feature type="strand" evidence="11">
    <location>
        <begin position="305"/>
        <end position="308"/>
    </location>
</feature>
<feature type="strand" evidence="11">
    <location>
        <begin position="311"/>
        <end position="314"/>
    </location>
</feature>
<feature type="helix" evidence="11">
    <location>
        <begin position="315"/>
        <end position="326"/>
    </location>
</feature>
<feature type="strand" evidence="11">
    <location>
        <begin position="336"/>
        <end position="343"/>
    </location>
</feature>
<feature type="helix" evidence="11">
    <location>
        <begin position="351"/>
        <end position="353"/>
    </location>
</feature>
<feature type="strand" evidence="11">
    <location>
        <begin position="354"/>
        <end position="362"/>
    </location>
</feature>
<feature type="helix" evidence="11">
    <location>
        <begin position="363"/>
        <end position="374"/>
    </location>
</feature>
<protein>
    <recommendedName>
        <fullName>Interferon regulatory factor 3</fullName>
        <shortName>IRF-3</shortName>
    </recommendedName>
</protein>
<sequence length="419" mass="46852">METPKPRILPWLVSQLDLGQLEGVAWLDESRTRFRIPWKHGLRQDAQMADFGIFQAWAEASGAYTPGKDKPDVSTWKRNFRSALNRKEVLRLAADNSKDPYDPHKVYEFVTPGARDFVHLGASPDTNGKSSLPHSQENLPKLFDGLILGPLKDEGSSDLAIVSDPSQQLPSPNVNNFLNPAPQENPLKQLLAEEQWEFEVTAFYRGRQVFQQTLFCPGGLRLVGSTADMTLPWQPVTLPDPEGFLTDKLVKEYVGQVLKGLGNGLALWQAGQCLWAQRLGHSHAFWALGEELLPDSGRGPDGEVHKDKDGAVFDLRPFVADLIAFMEGSGHSPRYTLWFCMGEMWPQDQPWVKRLVMVKVVPTCLKELLEMAREGGASSLKTVDLHISNSQPISLTSDQYKAYLQDLVEDMDFQATGNI</sequence>
<dbReference type="EMBL" id="U75839">
    <property type="protein sequence ID" value="AAB36924.1"/>
    <property type="molecule type" value="mRNA"/>
</dbReference>
<dbReference type="EMBL" id="U75840">
    <property type="protein sequence ID" value="AAB36925.1"/>
    <property type="molecule type" value="mRNA"/>
</dbReference>
<dbReference type="EMBL" id="BC050882">
    <property type="protein sequence ID" value="AAH50882.1"/>
    <property type="molecule type" value="mRNA"/>
</dbReference>
<dbReference type="CCDS" id="CCDS21224.1"/>
<dbReference type="RefSeq" id="NP_058545.1">
    <property type="nucleotide sequence ID" value="NM_016849.4"/>
</dbReference>
<dbReference type="RefSeq" id="XP_006541058.1">
    <property type="nucleotide sequence ID" value="XM_006540995.5"/>
</dbReference>
<dbReference type="RefSeq" id="XP_006541059.1">
    <property type="nucleotide sequence ID" value="XM_006540996.4"/>
</dbReference>
<dbReference type="PDB" id="7JFM">
    <property type="method" value="X-ray"/>
    <property type="resolution" value="2.23 A"/>
    <property type="chains" value="A/B=184-390"/>
</dbReference>
<dbReference type="PDBsum" id="7JFM"/>
<dbReference type="SMR" id="P70671"/>
<dbReference type="BioGRID" id="207570">
    <property type="interactions" value="13"/>
</dbReference>
<dbReference type="DIP" id="DIP-29881N"/>
<dbReference type="FunCoup" id="P70671">
    <property type="interactions" value="1878"/>
</dbReference>
<dbReference type="IntAct" id="P70671">
    <property type="interactions" value="3"/>
</dbReference>
<dbReference type="MINT" id="P70671"/>
<dbReference type="STRING" id="10090.ENSMUSP00000003284"/>
<dbReference type="ChEMBL" id="CHEMBL4105802"/>
<dbReference type="GlyGen" id="P70671">
    <property type="glycosylation" value="1 site"/>
</dbReference>
<dbReference type="iPTMnet" id="P70671"/>
<dbReference type="PhosphoSitePlus" id="P70671"/>
<dbReference type="jPOST" id="P70671"/>
<dbReference type="PaxDb" id="10090-ENSMUSP00000003284"/>
<dbReference type="PeptideAtlas" id="P70671"/>
<dbReference type="ProteomicsDB" id="268992"/>
<dbReference type="Pumba" id="P70671"/>
<dbReference type="Antibodypedia" id="1283">
    <property type="antibodies" value="1436 antibodies from 48 providers"/>
</dbReference>
<dbReference type="DNASU" id="54131"/>
<dbReference type="Ensembl" id="ENSMUST00000003284.16">
    <property type="protein sequence ID" value="ENSMUSP00000003284.9"/>
    <property type="gene ID" value="ENSMUSG00000003184.16"/>
</dbReference>
<dbReference type="Ensembl" id="ENSMUST00000107834.2">
    <property type="protein sequence ID" value="ENSMUSP00000103465.2"/>
    <property type="gene ID" value="ENSMUSG00000003184.16"/>
</dbReference>
<dbReference type="Ensembl" id="ENSMUST00000209066.2">
    <property type="protein sequence ID" value="ENSMUSP00000146773.2"/>
    <property type="gene ID" value="ENSMUSG00000003184.16"/>
</dbReference>
<dbReference type="GeneID" id="54131"/>
<dbReference type="KEGG" id="mmu:54131"/>
<dbReference type="UCSC" id="uc009gsm.2">
    <property type="organism name" value="mouse"/>
</dbReference>
<dbReference type="AGR" id="MGI:1859179"/>
<dbReference type="CTD" id="3661"/>
<dbReference type="MGI" id="MGI:1859179">
    <property type="gene designation" value="Irf3"/>
</dbReference>
<dbReference type="VEuPathDB" id="HostDB:ENSMUSG00000003184"/>
<dbReference type="eggNOG" id="ENOG502QTRR">
    <property type="taxonomic scope" value="Eukaryota"/>
</dbReference>
<dbReference type="GeneTree" id="ENSGT00940000160569"/>
<dbReference type="HOGENOM" id="CLU_031544_2_0_1"/>
<dbReference type="InParanoid" id="P70671"/>
<dbReference type="OMA" id="DRGVMGY"/>
<dbReference type="OrthoDB" id="8691508at2759"/>
<dbReference type="PhylomeDB" id="P70671"/>
<dbReference type="TreeFam" id="TF328512"/>
<dbReference type="Reactome" id="R-MMU-1169408">
    <property type="pathway name" value="ISG15 antiviral mechanism"/>
</dbReference>
<dbReference type="Reactome" id="R-MMU-1606341">
    <property type="pathway name" value="IRF3 mediated activation of type 1 IFN"/>
</dbReference>
<dbReference type="Reactome" id="R-MMU-168928">
    <property type="pathway name" value="DDX58/IFIH1-mediated induction of interferon-alpha/beta"/>
</dbReference>
<dbReference type="Reactome" id="R-MMU-3134973">
    <property type="pathway name" value="LRR FLII-interacting protein 1 (LRRFIP1) activates type I IFN production"/>
</dbReference>
<dbReference type="Reactome" id="R-MMU-3134975">
    <property type="pathway name" value="Regulation of innate immune responses to cytosolic DNA"/>
</dbReference>
<dbReference type="Reactome" id="R-MMU-3270619">
    <property type="pathway name" value="IRF3-mediated induction of type I IFN"/>
</dbReference>
<dbReference type="Reactome" id="R-MMU-9013973">
    <property type="pathway name" value="TICAM1-dependent activation of IRF3/IRF7"/>
</dbReference>
<dbReference type="Reactome" id="R-MMU-918233">
    <property type="pathway name" value="TRAF3-dependent IRF activation pathway"/>
</dbReference>
<dbReference type="Reactome" id="R-MMU-933541">
    <property type="pathway name" value="TRAF6 mediated IRF7 activation"/>
</dbReference>
<dbReference type="Reactome" id="R-MMU-936440">
    <property type="pathway name" value="Negative regulators of DDX58/IFIH1 signaling"/>
</dbReference>
<dbReference type="Reactome" id="R-MMU-936964">
    <property type="pathway name" value="Activation of IRF3, IRF7 mediated by TBK1, IKKEpsilon (IKBKE)"/>
</dbReference>
<dbReference type="BioGRID-ORCS" id="54131">
    <property type="hits" value="4 hits in 80 CRISPR screens"/>
</dbReference>
<dbReference type="ChiTaRS" id="Irf3">
    <property type="organism name" value="mouse"/>
</dbReference>
<dbReference type="PRO" id="PR:P70671"/>
<dbReference type="Proteomes" id="UP000000589">
    <property type="component" value="Chromosome 7"/>
</dbReference>
<dbReference type="RNAct" id="P70671">
    <property type="molecule type" value="protein"/>
</dbReference>
<dbReference type="Bgee" id="ENSMUSG00000003184">
    <property type="expression patterns" value="Expressed in retinal neural layer and 270 other cell types or tissues"/>
</dbReference>
<dbReference type="ExpressionAtlas" id="P70671">
    <property type="expression patterns" value="baseline and differential"/>
</dbReference>
<dbReference type="GO" id="GO:0000785">
    <property type="term" value="C:chromatin"/>
    <property type="evidence" value="ECO:0007669"/>
    <property type="project" value="Ensembl"/>
</dbReference>
<dbReference type="GO" id="GO:0005737">
    <property type="term" value="C:cytoplasm"/>
    <property type="evidence" value="ECO:0000314"/>
    <property type="project" value="MGI"/>
</dbReference>
<dbReference type="GO" id="GO:0005829">
    <property type="term" value="C:cytosol"/>
    <property type="evidence" value="ECO:0000304"/>
    <property type="project" value="Reactome"/>
</dbReference>
<dbReference type="GO" id="GO:0005739">
    <property type="term" value="C:mitochondrion"/>
    <property type="evidence" value="ECO:0000250"/>
    <property type="project" value="UniProtKB"/>
</dbReference>
<dbReference type="GO" id="GO:0005634">
    <property type="term" value="C:nucleus"/>
    <property type="evidence" value="ECO:0000314"/>
    <property type="project" value="MGI"/>
</dbReference>
<dbReference type="GO" id="GO:0001228">
    <property type="term" value="F:DNA-binding transcription activator activity, RNA polymerase II-specific"/>
    <property type="evidence" value="ECO:0007669"/>
    <property type="project" value="Ensembl"/>
</dbReference>
<dbReference type="GO" id="GO:0000981">
    <property type="term" value="F:DNA-binding transcription factor activity, RNA polymerase II-specific"/>
    <property type="evidence" value="ECO:0000314"/>
    <property type="project" value="UniProtKB"/>
</dbReference>
<dbReference type="GO" id="GO:0042802">
    <property type="term" value="F:identical protein binding"/>
    <property type="evidence" value="ECO:0000353"/>
    <property type="project" value="IntAct"/>
</dbReference>
<dbReference type="GO" id="GO:1990841">
    <property type="term" value="F:promoter-specific chromatin binding"/>
    <property type="evidence" value="ECO:0000314"/>
    <property type="project" value="MGI"/>
</dbReference>
<dbReference type="GO" id="GO:0019904">
    <property type="term" value="F:protein domain specific binding"/>
    <property type="evidence" value="ECO:0007669"/>
    <property type="project" value="Ensembl"/>
</dbReference>
<dbReference type="GO" id="GO:0042803">
    <property type="term" value="F:protein homodimerization activity"/>
    <property type="evidence" value="ECO:0007669"/>
    <property type="project" value="Ensembl"/>
</dbReference>
<dbReference type="GO" id="GO:0000978">
    <property type="term" value="F:RNA polymerase II cis-regulatory region sequence-specific DNA binding"/>
    <property type="evidence" value="ECO:0007669"/>
    <property type="project" value="Ensembl"/>
</dbReference>
<dbReference type="GO" id="GO:0071222">
    <property type="term" value="P:cellular response to lipopolysaccharide"/>
    <property type="evidence" value="ECO:0000314"/>
    <property type="project" value="MGI"/>
</dbReference>
<dbReference type="GO" id="GO:0098586">
    <property type="term" value="P:cellular response to virus"/>
    <property type="evidence" value="ECO:0000314"/>
    <property type="project" value="MGI"/>
</dbReference>
<dbReference type="GO" id="GO:0002753">
    <property type="term" value="P:cytoplasmic pattern recognition receptor signaling pathway"/>
    <property type="evidence" value="ECO:0007669"/>
    <property type="project" value="Ensembl"/>
</dbReference>
<dbReference type="GO" id="GO:0051607">
    <property type="term" value="P:defense response to virus"/>
    <property type="evidence" value="ECO:0000315"/>
    <property type="project" value="UniProtKB"/>
</dbReference>
<dbReference type="GO" id="GO:0031663">
    <property type="term" value="P:lipopolysaccharide-mediated signaling pathway"/>
    <property type="evidence" value="ECO:0000314"/>
    <property type="project" value="MGI"/>
</dbReference>
<dbReference type="GO" id="GO:0045893">
    <property type="term" value="P:positive regulation of DNA-templated transcription"/>
    <property type="evidence" value="ECO:0000315"/>
    <property type="project" value="UniProtKB"/>
</dbReference>
<dbReference type="GO" id="GO:0032727">
    <property type="term" value="P:positive regulation of interferon-alpha production"/>
    <property type="evidence" value="ECO:0000315"/>
    <property type="project" value="UniProtKB"/>
</dbReference>
<dbReference type="GO" id="GO:0032728">
    <property type="term" value="P:positive regulation of interferon-beta production"/>
    <property type="evidence" value="ECO:0000315"/>
    <property type="project" value="UniProtKB"/>
</dbReference>
<dbReference type="GO" id="GO:0032481">
    <property type="term" value="P:positive regulation of type I interferon production"/>
    <property type="evidence" value="ECO:0000314"/>
    <property type="project" value="UniProtKB"/>
</dbReference>
<dbReference type="GO" id="GO:0060340">
    <property type="term" value="P:positive regulation of type I interferon-mediated signaling pathway"/>
    <property type="evidence" value="ECO:0000315"/>
    <property type="project" value="MGI"/>
</dbReference>
<dbReference type="GO" id="GO:0097300">
    <property type="term" value="P:programmed necrotic cell death"/>
    <property type="evidence" value="ECO:0000315"/>
    <property type="project" value="MGI"/>
</dbReference>
<dbReference type="GO" id="GO:0042981">
    <property type="term" value="P:regulation of apoptotic process"/>
    <property type="evidence" value="ECO:0000250"/>
    <property type="project" value="UniProtKB"/>
</dbReference>
<dbReference type="GO" id="GO:0010468">
    <property type="term" value="P:regulation of gene expression"/>
    <property type="evidence" value="ECO:0000316"/>
    <property type="project" value="MGI"/>
</dbReference>
<dbReference type="GO" id="GO:0050727">
    <property type="term" value="P:regulation of inflammatory response"/>
    <property type="evidence" value="ECO:0000316"/>
    <property type="project" value="MGI"/>
</dbReference>
<dbReference type="GO" id="GO:0009617">
    <property type="term" value="P:response to bacterium"/>
    <property type="evidence" value="ECO:0000314"/>
    <property type="project" value="MGI"/>
</dbReference>
<dbReference type="GO" id="GO:0043330">
    <property type="term" value="P:response to exogenous dsRNA"/>
    <property type="evidence" value="ECO:0000314"/>
    <property type="project" value="MGI"/>
</dbReference>
<dbReference type="GO" id="GO:0032496">
    <property type="term" value="P:response to lipopolysaccharide"/>
    <property type="evidence" value="ECO:0000314"/>
    <property type="project" value="MGI"/>
</dbReference>
<dbReference type="GO" id="GO:0034142">
    <property type="term" value="P:toll-like receptor 4 signaling pathway"/>
    <property type="evidence" value="ECO:0007669"/>
    <property type="project" value="Ensembl"/>
</dbReference>
<dbReference type="GO" id="GO:0035666">
    <property type="term" value="P:TRIF-dependent toll-like receptor signaling pathway"/>
    <property type="evidence" value="ECO:0000250"/>
    <property type="project" value="UniProtKB"/>
</dbReference>
<dbReference type="GO" id="GO:0060337">
    <property type="term" value="P:type I interferon-mediated signaling pathway"/>
    <property type="evidence" value="ECO:0000315"/>
    <property type="project" value="UniProtKB"/>
</dbReference>
<dbReference type="CDD" id="cd00103">
    <property type="entry name" value="IRF"/>
    <property type="match status" value="1"/>
</dbReference>
<dbReference type="FunFam" id="1.10.10.10:FF:000263">
    <property type="entry name" value="Interferon regulatory factor 3"/>
    <property type="match status" value="1"/>
</dbReference>
<dbReference type="FunFam" id="2.60.200.10:FF:000008">
    <property type="entry name" value="Interferon regulatory factor 3"/>
    <property type="match status" value="1"/>
</dbReference>
<dbReference type="Gene3D" id="2.60.200.10">
    <property type="match status" value="1"/>
</dbReference>
<dbReference type="Gene3D" id="1.10.10.10">
    <property type="entry name" value="Winged helix-like DNA-binding domain superfamily/Winged helix DNA-binding domain"/>
    <property type="match status" value="1"/>
</dbReference>
<dbReference type="InterPro" id="IPR019817">
    <property type="entry name" value="Interferon_reg_fac_CS"/>
</dbReference>
<dbReference type="InterPro" id="IPR001346">
    <property type="entry name" value="Interferon_reg_fact_DNA-bd_dom"/>
</dbReference>
<dbReference type="InterPro" id="IPR019471">
    <property type="entry name" value="Interferon_reg_factor-3"/>
</dbReference>
<dbReference type="InterPro" id="IPR017855">
    <property type="entry name" value="SMAD-like_dom_sf"/>
</dbReference>
<dbReference type="InterPro" id="IPR008984">
    <property type="entry name" value="SMAD_FHA_dom_sf"/>
</dbReference>
<dbReference type="InterPro" id="IPR036388">
    <property type="entry name" value="WH-like_DNA-bd_sf"/>
</dbReference>
<dbReference type="InterPro" id="IPR036390">
    <property type="entry name" value="WH_DNA-bd_sf"/>
</dbReference>
<dbReference type="PANTHER" id="PTHR11949">
    <property type="entry name" value="INTERFERON REGULATORY FACTOR"/>
    <property type="match status" value="1"/>
</dbReference>
<dbReference type="PANTHER" id="PTHR11949:SF1">
    <property type="entry name" value="INTERFERON REGULATORY FACTOR 3"/>
    <property type="match status" value="1"/>
</dbReference>
<dbReference type="Pfam" id="PF00605">
    <property type="entry name" value="IRF"/>
    <property type="match status" value="1"/>
</dbReference>
<dbReference type="Pfam" id="PF10401">
    <property type="entry name" value="IRF-3"/>
    <property type="match status" value="1"/>
</dbReference>
<dbReference type="PRINTS" id="PR00267">
    <property type="entry name" value="INTFRNREGFCT"/>
</dbReference>
<dbReference type="SMART" id="SM00348">
    <property type="entry name" value="IRF"/>
    <property type="match status" value="1"/>
</dbReference>
<dbReference type="SMART" id="SM01243">
    <property type="entry name" value="IRF-3"/>
    <property type="match status" value="1"/>
</dbReference>
<dbReference type="SUPFAM" id="SSF49879">
    <property type="entry name" value="SMAD/FHA domain"/>
    <property type="match status" value="1"/>
</dbReference>
<dbReference type="SUPFAM" id="SSF46785">
    <property type="entry name" value="Winged helix' DNA-binding domain"/>
    <property type="match status" value="1"/>
</dbReference>
<dbReference type="PROSITE" id="PS00601">
    <property type="entry name" value="IRF_1"/>
    <property type="match status" value="1"/>
</dbReference>
<dbReference type="PROSITE" id="PS51507">
    <property type="entry name" value="IRF_2"/>
    <property type="match status" value="1"/>
</dbReference>
<evidence type="ECO:0000250" key="1">
    <source>
        <dbReference type="UniProtKB" id="Q14653"/>
    </source>
</evidence>
<evidence type="ECO:0000255" key="2">
    <source>
        <dbReference type="PROSITE-ProRule" id="PRU00840"/>
    </source>
</evidence>
<evidence type="ECO:0000269" key="3">
    <source>
    </source>
</evidence>
<evidence type="ECO:0000269" key="4">
    <source>
    </source>
</evidence>
<evidence type="ECO:0000269" key="5">
    <source>
    </source>
</evidence>
<evidence type="ECO:0000269" key="6">
    <source>
    </source>
</evidence>
<evidence type="ECO:0000303" key="7">
    <source>
    </source>
</evidence>
<evidence type="ECO:0000303" key="8">
    <source>
    </source>
</evidence>
<evidence type="ECO:0000303" key="9">
    <source>
    </source>
</evidence>
<evidence type="ECO:0007744" key="10">
    <source>
    </source>
</evidence>
<evidence type="ECO:0007829" key="11">
    <source>
        <dbReference type="PDB" id="7JFM"/>
    </source>
</evidence>
<keyword id="KW-0002">3D-structure</keyword>
<keyword id="KW-0007">Acetylation</keyword>
<keyword id="KW-0010">Activator</keyword>
<keyword id="KW-0051">Antiviral defense</keyword>
<keyword id="KW-0963">Cytoplasm</keyword>
<keyword id="KW-0238">DNA-binding</keyword>
<keyword id="KW-0391">Immunity</keyword>
<keyword id="KW-0399">Innate immunity</keyword>
<keyword id="KW-1017">Isopeptide bond</keyword>
<keyword id="KW-0496">Mitochondrion</keyword>
<keyword id="KW-0539">Nucleus</keyword>
<keyword id="KW-0597">Phosphoprotein</keyword>
<keyword id="KW-1185">Reference proteome</keyword>
<keyword id="KW-0804">Transcription</keyword>
<keyword id="KW-0805">Transcription regulation</keyword>
<keyword id="KW-0832">Ubl conjugation</keyword>
<proteinExistence type="evidence at protein level"/>
<reference key="1">
    <citation type="submission" date="1996-11" db="EMBL/GenBank/DDBJ databases">
        <authorList>
            <person name="Hakem R."/>
            <person name="Grossman A."/>
            <person name="Antonio L."/>
            <person name="Suggs S."/>
            <person name="Mak T.W."/>
        </authorList>
    </citation>
    <scope>NUCLEOTIDE SEQUENCE [MRNA]</scope>
    <source>
        <strain>BALB/cJ</strain>
        <tissue>Liver</tissue>
    </source>
</reference>
<reference key="2">
    <citation type="journal article" date="2004" name="Genome Res.">
        <title>The status, quality, and expansion of the NIH full-length cDNA project: the Mammalian Gene Collection (MGC).</title>
        <authorList>
            <consortium name="The MGC Project Team"/>
        </authorList>
    </citation>
    <scope>NUCLEOTIDE SEQUENCE [LARGE SCALE MRNA]</scope>
    <source>
        <strain>C57BL/6J</strain>
        <tissue>Brain</tissue>
    </source>
</reference>
<reference key="3">
    <citation type="journal article" date="2005" name="Nature">
        <title>IRF-7 is the master regulator of type-I interferon-dependent immune responses.</title>
        <authorList>
            <person name="Honda K."/>
            <person name="Yanai H."/>
            <person name="Negishi H."/>
            <person name="Asagiri M."/>
            <person name="Sato M."/>
            <person name="Mizutani T."/>
            <person name="Shimada N."/>
            <person name="Ohba Y."/>
            <person name="Takaoka A."/>
            <person name="Yoshida N."/>
            <person name="Taniguchi T."/>
        </authorList>
    </citation>
    <scope>FUNCTION</scope>
</reference>
<reference key="4">
    <citation type="journal article" date="2006" name="Biochem. Pharmacol.">
        <title>Distinct functions of IRF-3 and IRF-7 in IFN-alpha gene regulation and control of anti-tumor activity in primary macrophages.</title>
        <authorList>
            <person name="Solis M."/>
            <person name="Goubau D."/>
            <person name="Romieu-Mourez R."/>
            <person name="Genin P."/>
            <person name="Civas A."/>
            <person name="Hiscott J."/>
        </authorList>
    </citation>
    <scope>REVIEW ON FUNCTION</scope>
</reference>
<reference key="5">
    <citation type="journal article" date="2006" name="Immunity">
        <title>Type I interferon gene induction by the interferon regulatory factor family of transcription factors.</title>
        <authorList>
            <person name="Honda K."/>
            <person name="Takaoka A."/>
            <person name="Taniguchi T."/>
        </authorList>
    </citation>
    <scope>REVIEW ON FUNCTION</scope>
</reference>
<reference key="6">
    <citation type="journal article" date="2006" name="Immunity">
        <authorList>
            <person name="Honda K."/>
            <person name="Takaoka A."/>
            <person name="Taniguchi T."/>
        </authorList>
    </citation>
    <scope>ERRATUM OF PUBMED:16979567</scope>
</reference>
<reference key="7">
    <citation type="journal article" date="2008" name="Cell">
        <title>Trex1 prevents cell-intrinsic initiation of autoimmunity.</title>
        <authorList>
            <person name="Stetson D.B."/>
            <person name="Ko J.S."/>
            <person name="Heidmann T."/>
            <person name="Medzhitov R."/>
        </authorList>
    </citation>
    <scope>DISRUPTION PHENOTYPE</scope>
</reference>
<reference key="8">
    <citation type="journal article" date="2010" name="Cancer Immunol. Immunother.">
        <title>Regulation of immunity and oncogenesis by the IRF transcription factor family.</title>
        <authorList>
            <person name="Savitsky D."/>
            <person name="Tamura T."/>
            <person name="Yanai H."/>
            <person name="Taniguchi T."/>
        </authorList>
    </citation>
    <scope>REVIEW ON FUNCTION</scope>
</reference>
<reference key="9">
    <citation type="journal article" date="2010" name="Cell">
        <title>A tissue-specific atlas of mouse protein phosphorylation and expression.</title>
        <authorList>
            <person name="Huttlin E.L."/>
            <person name="Jedrychowski M.P."/>
            <person name="Elias J.E."/>
            <person name="Goswami T."/>
            <person name="Rad R."/>
            <person name="Beausoleil S.A."/>
            <person name="Villen J."/>
            <person name="Haas W."/>
            <person name="Sowa M.E."/>
            <person name="Gygi S.P."/>
        </authorList>
    </citation>
    <scope>PHOSPHORYLATION [LARGE SCALE ANALYSIS] AT SER-123 AND SER-135</scope>
    <scope>IDENTIFICATION BY MASS SPECTROMETRY [LARGE SCALE ANALYSIS]</scope>
    <source>
        <tissue>Brown adipose tissue</tissue>
        <tissue>Kidney</tissue>
        <tissue>Liver</tissue>
        <tissue>Lung</tissue>
        <tissue>Pancreas</tissue>
        <tissue>Spleen</tissue>
        <tissue>Testis</tissue>
    </source>
</reference>
<reference key="10">
    <citation type="journal article" date="2011" name="J. Biol. Chem.">
        <title>Inhibitor of kappaB kinase epsilon (IKK(epsilon)), STAT1, and IFIT2 proteins define novel innate immune effector pathway against West Nile virus infection.</title>
        <authorList>
            <person name="Perwitasari O."/>
            <person name="Cho H."/>
            <person name="Diamond M.S."/>
            <person name="Gale M. Jr."/>
        </authorList>
    </citation>
    <scope>PHOSPHORYLATION UPON SSRNA VIRAL INFECTION</scope>
</reference>
<reference key="11">
    <citation type="journal article" date="2019" name="J. Exp. Med.">
        <title>KAT8 selectively inhibits antiviral immunity by acetylating IRF3.</title>
        <authorList>
            <person name="Huai W."/>
            <person name="Liu X."/>
            <person name="Wang C."/>
            <person name="Zhang Y."/>
            <person name="Chen X."/>
            <person name="Chen X."/>
            <person name="Xu S."/>
            <person name="Thomas T."/>
            <person name="Li N."/>
            <person name="Cao X."/>
        </authorList>
    </citation>
    <scope>PHOSPHORYLATION AT SER-388</scope>
    <scope>ACETYLATION AT LYS-359</scope>
    <scope>MUTAGENESIS OF LYS-68; LYS-70; LYS-152; LYS-359 AND SER-388</scope>
</reference>
<accession>P70671</accession>
<name>IRF3_MOUSE</name>